<accession>B6IZL5</accession>
<comment type="function">
    <text evidence="1">Catalyzes the transfer of endogenously produced octanoic acid from octanoyl-acyl-carrier-protein onto the lipoyl domains of lipoate-dependent enzymes. Lipoyl-ACP can also act as a substrate although octanoyl-ACP is likely to be the physiological substrate.</text>
</comment>
<comment type="catalytic activity">
    <reaction evidence="1">
        <text>octanoyl-[ACP] + L-lysyl-[protein] = N(6)-octanoyl-L-lysyl-[protein] + holo-[ACP] + H(+)</text>
        <dbReference type="Rhea" id="RHEA:17665"/>
        <dbReference type="Rhea" id="RHEA-COMP:9636"/>
        <dbReference type="Rhea" id="RHEA-COMP:9685"/>
        <dbReference type="Rhea" id="RHEA-COMP:9752"/>
        <dbReference type="Rhea" id="RHEA-COMP:9928"/>
        <dbReference type="ChEBI" id="CHEBI:15378"/>
        <dbReference type="ChEBI" id="CHEBI:29969"/>
        <dbReference type="ChEBI" id="CHEBI:64479"/>
        <dbReference type="ChEBI" id="CHEBI:78463"/>
        <dbReference type="ChEBI" id="CHEBI:78809"/>
        <dbReference type="EC" id="2.3.1.181"/>
    </reaction>
</comment>
<comment type="pathway">
    <text evidence="1">Protein modification; protein lipoylation via endogenous pathway; protein N(6)-(lipoyl)lysine from octanoyl-[acyl-carrier-protein]: step 1/2.</text>
</comment>
<comment type="subcellular location">
    <subcellularLocation>
        <location evidence="1">Cytoplasm</location>
    </subcellularLocation>
</comment>
<comment type="miscellaneous">
    <text evidence="1">In the reaction, the free carboxyl group of octanoic acid is attached via an amide linkage to the epsilon-amino group of a specific lysine residue of lipoyl domains of lipoate-dependent enzymes.</text>
</comment>
<comment type="similarity">
    <text evidence="1">Belongs to the LipB family.</text>
</comment>
<dbReference type="EC" id="2.3.1.181" evidence="1"/>
<dbReference type="EMBL" id="CP001019">
    <property type="protein sequence ID" value="ACJ18143.1"/>
    <property type="molecule type" value="Genomic_DNA"/>
</dbReference>
<dbReference type="RefSeq" id="WP_005772535.1">
    <property type="nucleotide sequence ID" value="NC_011527.1"/>
</dbReference>
<dbReference type="SMR" id="B6IZL5"/>
<dbReference type="KEGG" id="cbg:CbuG_0746"/>
<dbReference type="HOGENOM" id="CLU_035168_3_1_6"/>
<dbReference type="UniPathway" id="UPA00538">
    <property type="reaction ID" value="UER00592"/>
</dbReference>
<dbReference type="GO" id="GO:0005737">
    <property type="term" value="C:cytoplasm"/>
    <property type="evidence" value="ECO:0007669"/>
    <property type="project" value="UniProtKB-SubCell"/>
</dbReference>
<dbReference type="GO" id="GO:0033819">
    <property type="term" value="F:lipoyl(octanoyl) transferase activity"/>
    <property type="evidence" value="ECO:0007669"/>
    <property type="project" value="UniProtKB-EC"/>
</dbReference>
<dbReference type="GO" id="GO:0036211">
    <property type="term" value="P:protein modification process"/>
    <property type="evidence" value="ECO:0007669"/>
    <property type="project" value="InterPro"/>
</dbReference>
<dbReference type="CDD" id="cd16444">
    <property type="entry name" value="LipB"/>
    <property type="match status" value="1"/>
</dbReference>
<dbReference type="FunFam" id="3.30.930.10:FF:000020">
    <property type="entry name" value="Octanoyltransferase"/>
    <property type="match status" value="1"/>
</dbReference>
<dbReference type="Gene3D" id="3.30.930.10">
    <property type="entry name" value="Bira Bifunctional Protein, Domain 2"/>
    <property type="match status" value="1"/>
</dbReference>
<dbReference type="HAMAP" id="MF_00013">
    <property type="entry name" value="LipB"/>
    <property type="match status" value="1"/>
</dbReference>
<dbReference type="InterPro" id="IPR045864">
    <property type="entry name" value="aa-tRNA-synth_II/BPL/LPL"/>
</dbReference>
<dbReference type="InterPro" id="IPR004143">
    <property type="entry name" value="BPL_LPL_catalytic"/>
</dbReference>
<dbReference type="InterPro" id="IPR000544">
    <property type="entry name" value="Octanoyltransferase"/>
</dbReference>
<dbReference type="InterPro" id="IPR020605">
    <property type="entry name" value="Octanoyltransferase_CS"/>
</dbReference>
<dbReference type="NCBIfam" id="TIGR00214">
    <property type="entry name" value="lipB"/>
    <property type="match status" value="1"/>
</dbReference>
<dbReference type="NCBIfam" id="NF010922">
    <property type="entry name" value="PRK14342.1"/>
    <property type="match status" value="1"/>
</dbReference>
<dbReference type="PANTHER" id="PTHR10993:SF7">
    <property type="entry name" value="LIPOYLTRANSFERASE 2, MITOCHONDRIAL-RELATED"/>
    <property type="match status" value="1"/>
</dbReference>
<dbReference type="PANTHER" id="PTHR10993">
    <property type="entry name" value="OCTANOYLTRANSFERASE"/>
    <property type="match status" value="1"/>
</dbReference>
<dbReference type="Pfam" id="PF21948">
    <property type="entry name" value="LplA-B_cat"/>
    <property type="match status" value="1"/>
</dbReference>
<dbReference type="PIRSF" id="PIRSF016262">
    <property type="entry name" value="LPLase"/>
    <property type="match status" value="1"/>
</dbReference>
<dbReference type="SUPFAM" id="SSF55681">
    <property type="entry name" value="Class II aaRS and biotin synthetases"/>
    <property type="match status" value="1"/>
</dbReference>
<dbReference type="PROSITE" id="PS51733">
    <property type="entry name" value="BPL_LPL_CATALYTIC"/>
    <property type="match status" value="1"/>
</dbReference>
<dbReference type="PROSITE" id="PS01313">
    <property type="entry name" value="LIPB"/>
    <property type="match status" value="1"/>
</dbReference>
<gene>
    <name evidence="1" type="primary">lipB</name>
    <name type="ordered locus">CbuG_0746</name>
</gene>
<name>LIPB_COXB2</name>
<keyword id="KW-0012">Acyltransferase</keyword>
<keyword id="KW-0963">Cytoplasm</keyword>
<keyword id="KW-0808">Transferase</keyword>
<evidence type="ECO:0000255" key="1">
    <source>
        <dbReference type="HAMAP-Rule" id="MF_00013"/>
    </source>
</evidence>
<evidence type="ECO:0000255" key="2">
    <source>
        <dbReference type="PROSITE-ProRule" id="PRU01067"/>
    </source>
</evidence>
<proteinExistence type="inferred from homology"/>
<sequence length="242" mass="27460">MNDVIIRQLAHLIPYQPLWEAMQTFTARRQSQTTDEIWFLEHEPVFTQGLAGKPEHVLNSGNIPLIRTDRGGQVTYHGPGQLMMYLLLDLNRLGLSTRTFVRTIENTVAESLQEWGIPAQGKETAPGVYVDDKKICSIGLRVRKGFSYHGLALNVAMDLTPFSCINPCGFKGLMMTQIQDYVNPIEMDAVKRTIIPLFLKNFGYNQPAIMVETSLEFLIDDHLRSFSEKLGERETVTNSRQN</sequence>
<organism>
    <name type="scientific">Coxiella burnetii (strain CbuG_Q212)</name>
    <name type="common">Coxiella burnetii (strain Q212)</name>
    <dbReference type="NCBI Taxonomy" id="434923"/>
    <lineage>
        <taxon>Bacteria</taxon>
        <taxon>Pseudomonadati</taxon>
        <taxon>Pseudomonadota</taxon>
        <taxon>Gammaproteobacteria</taxon>
        <taxon>Legionellales</taxon>
        <taxon>Coxiellaceae</taxon>
        <taxon>Coxiella</taxon>
    </lineage>
</organism>
<reference key="1">
    <citation type="journal article" date="2009" name="Infect. Immun.">
        <title>Comparative genomics reveal extensive transposon-mediated genomic plasticity and diversity among potential effector proteins within the genus Coxiella.</title>
        <authorList>
            <person name="Beare P.A."/>
            <person name="Unsworth N."/>
            <person name="Andoh M."/>
            <person name="Voth D.E."/>
            <person name="Omsland A."/>
            <person name="Gilk S.D."/>
            <person name="Williams K.P."/>
            <person name="Sobral B.W."/>
            <person name="Kupko J.J. III"/>
            <person name="Porcella S.F."/>
            <person name="Samuel J.E."/>
            <person name="Heinzen R.A."/>
        </authorList>
    </citation>
    <scope>NUCLEOTIDE SEQUENCE [LARGE SCALE GENOMIC DNA]</scope>
    <source>
        <strain>CbuG_Q212</strain>
    </source>
</reference>
<feature type="chain" id="PRO_1000089452" description="Octanoyltransferase">
    <location>
        <begin position="1"/>
        <end position="242"/>
    </location>
</feature>
<feature type="domain" description="BPL/LPL catalytic" evidence="2">
    <location>
        <begin position="31"/>
        <end position="206"/>
    </location>
</feature>
<feature type="active site" description="Acyl-thioester intermediate" evidence="1">
    <location>
        <position position="168"/>
    </location>
</feature>
<feature type="binding site" evidence="1">
    <location>
        <begin position="70"/>
        <end position="77"/>
    </location>
    <ligand>
        <name>substrate</name>
    </ligand>
</feature>
<feature type="binding site" evidence="1">
    <location>
        <begin position="137"/>
        <end position="139"/>
    </location>
    <ligand>
        <name>substrate</name>
    </ligand>
</feature>
<feature type="binding site" evidence="1">
    <location>
        <begin position="150"/>
        <end position="152"/>
    </location>
    <ligand>
        <name>substrate</name>
    </ligand>
</feature>
<feature type="site" description="Lowers pKa of active site Cys" evidence="1">
    <location>
        <position position="134"/>
    </location>
</feature>
<protein>
    <recommendedName>
        <fullName evidence="1">Octanoyltransferase</fullName>
        <ecNumber evidence="1">2.3.1.181</ecNumber>
    </recommendedName>
    <alternativeName>
        <fullName evidence="1">Lipoate-protein ligase B</fullName>
    </alternativeName>
    <alternativeName>
        <fullName evidence="1">Lipoyl/octanoyl transferase</fullName>
    </alternativeName>
    <alternativeName>
        <fullName evidence="1">Octanoyl-[acyl-carrier-protein]-protein N-octanoyltransferase</fullName>
    </alternativeName>
</protein>